<accession>A8EZJ7</accession>
<protein>
    <recommendedName>
        <fullName evidence="1">Large ribosomal subunit protein uL15</fullName>
    </recommendedName>
    <alternativeName>
        <fullName evidence="3">50S ribosomal protein L15</fullName>
    </alternativeName>
</protein>
<name>RL15_RICCK</name>
<proteinExistence type="inferred from homology"/>
<sequence>MKLNELYNNIGAKKRKKRIARGIGSGKGKTGGRGIKGQKSRSGVAIKGFEGGQTPIIKRLPKRGFNCISTKKYNIVNIYNIEVALADGRLSVADIITKEKLIEAGVVNNKNNKKLVKLLSLCSDDFATPLSLKLDAYSSKAKDFIEQAGGKLL</sequence>
<reference key="1">
    <citation type="submission" date="2007-09" db="EMBL/GenBank/DDBJ databases">
        <title>Complete genome sequence of Rickettsia canadensis.</title>
        <authorList>
            <person name="Madan A."/>
            <person name="Fahey J."/>
            <person name="Helton E."/>
            <person name="Ketteman M."/>
            <person name="Madan A."/>
            <person name="Rodrigues S."/>
            <person name="Sanchez A."/>
            <person name="Whiting M."/>
            <person name="Dasch G."/>
            <person name="Eremeeva M."/>
        </authorList>
    </citation>
    <scope>NUCLEOTIDE SEQUENCE [LARGE SCALE GENOMIC DNA]</scope>
    <source>
        <strain>McKiel</strain>
    </source>
</reference>
<comment type="function">
    <text evidence="1">Binds to the 23S rRNA.</text>
</comment>
<comment type="subunit">
    <text evidence="1">Part of the 50S ribosomal subunit.</text>
</comment>
<comment type="similarity">
    <text evidence="1">Belongs to the universal ribosomal protein uL15 family.</text>
</comment>
<evidence type="ECO:0000255" key="1">
    <source>
        <dbReference type="HAMAP-Rule" id="MF_01341"/>
    </source>
</evidence>
<evidence type="ECO:0000256" key="2">
    <source>
        <dbReference type="SAM" id="MobiDB-lite"/>
    </source>
</evidence>
<evidence type="ECO:0000305" key="3"/>
<keyword id="KW-0687">Ribonucleoprotein</keyword>
<keyword id="KW-0689">Ribosomal protein</keyword>
<keyword id="KW-0694">RNA-binding</keyword>
<keyword id="KW-0699">rRNA-binding</keyword>
<organism>
    <name type="scientific">Rickettsia canadensis (strain McKiel)</name>
    <dbReference type="NCBI Taxonomy" id="293613"/>
    <lineage>
        <taxon>Bacteria</taxon>
        <taxon>Pseudomonadati</taxon>
        <taxon>Pseudomonadota</taxon>
        <taxon>Alphaproteobacteria</taxon>
        <taxon>Rickettsiales</taxon>
        <taxon>Rickettsiaceae</taxon>
        <taxon>Rickettsieae</taxon>
        <taxon>Rickettsia</taxon>
        <taxon>belli group</taxon>
    </lineage>
</organism>
<dbReference type="EMBL" id="CP000409">
    <property type="protein sequence ID" value="ABV73780.1"/>
    <property type="molecule type" value="Genomic_DNA"/>
</dbReference>
<dbReference type="RefSeq" id="WP_012148975.1">
    <property type="nucleotide sequence ID" value="NC_009879.1"/>
</dbReference>
<dbReference type="SMR" id="A8EZJ7"/>
<dbReference type="STRING" id="293613.A1E_04275"/>
<dbReference type="KEGG" id="rcm:A1E_04275"/>
<dbReference type="eggNOG" id="COG0200">
    <property type="taxonomic scope" value="Bacteria"/>
</dbReference>
<dbReference type="HOGENOM" id="CLU_055188_4_0_5"/>
<dbReference type="Proteomes" id="UP000007056">
    <property type="component" value="Chromosome"/>
</dbReference>
<dbReference type="GO" id="GO:0015934">
    <property type="term" value="C:large ribosomal subunit"/>
    <property type="evidence" value="ECO:0007669"/>
    <property type="project" value="InterPro"/>
</dbReference>
<dbReference type="GO" id="GO:0019843">
    <property type="term" value="F:rRNA binding"/>
    <property type="evidence" value="ECO:0007669"/>
    <property type="project" value="UniProtKB-UniRule"/>
</dbReference>
<dbReference type="GO" id="GO:0003735">
    <property type="term" value="F:structural constituent of ribosome"/>
    <property type="evidence" value="ECO:0007669"/>
    <property type="project" value="InterPro"/>
</dbReference>
<dbReference type="GO" id="GO:0006412">
    <property type="term" value="P:translation"/>
    <property type="evidence" value="ECO:0007669"/>
    <property type="project" value="UniProtKB-UniRule"/>
</dbReference>
<dbReference type="Gene3D" id="3.100.10.10">
    <property type="match status" value="1"/>
</dbReference>
<dbReference type="HAMAP" id="MF_01341">
    <property type="entry name" value="Ribosomal_uL15"/>
    <property type="match status" value="1"/>
</dbReference>
<dbReference type="InterPro" id="IPR030878">
    <property type="entry name" value="Ribosomal_uL15"/>
</dbReference>
<dbReference type="InterPro" id="IPR021131">
    <property type="entry name" value="Ribosomal_uL15/eL18"/>
</dbReference>
<dbReference type="InterPro" id="IPR036227">
    <property type="entry name" value="Ribosomal_uL15/eL18_sf"/>
</dbReference>
<dbReference type="InterPro" id="IPR005749">
    <property type="entry name" value="Ribosomal_uL15_bac-type"/>
</dbReference>
<dbReference type="NCBIfam" id="TIGR01071">
    <property type="entry name" value="rplO_bact"/>
    <property type="match status" value="1"/>
</dbReference>
<dbReference type="PANTHER" id="PTHR12934">
    <property type="entry name" value="50S RIBOSOMAL PROTEIN L15"/>
    <property type="match status" value="1"/>
</dbReference>
<dbReference type="PANTHER" id="PTHR12934:SF11">
    <property type="entry name" value="LARGE RIBOSOMAL SUBUNIT PROTEIN UL15M"/>
    <property type="match status" value="1"/>
</dbReference>
<dbReference type="Pfam" id="PF00828">
    <property type="entry name" value="Ribosomal_L27A"/>
    <property type="match status" value="1"/>
</dbReference>
<dbReference type="SUPFAM" id="SSF52080">
    <property type="entry name" value="Ribosomal proteins L15p and L18e"/>
    <property type="match status" value="1"/>
</dbReference>
<feature type="chain" id="PRO_1000054530" description="Large ribosomal subunit protein uL15">
    <location>
        <begin position="1"/>
        <end position="153"/>
    </location>
</feature>
<feature type="region of interest" description="Disordered" evidence="2">
    <location>
        <begin position="21"/>
        <end position="40"/>
    </location>
</feature>
<feature type="compositionally biased region" description="Gly residues" evidence="2">
    <location>
        <begin position="23"/>
        <end position="35"/>
    </location>
</feature>
<gene>
    <name evidence="1" type="primary">rplO</name>
    <name type="ordered locus">A1E_04275</name>
</gene>